<organism>
    <name type="scientific">Mus musculus</name>
    <name type="common">Mouse</name>
    <dbReference type="NCBI Taxonomy" id="10090"/>
    <lineage>
        <taxon>Eukaryota</taxon>
        <taxon>Metazoa</taxon>
        <taxon>Chordata</taxon>
        <taxon>Craniata</taxon>
        <taxon>Vertebrata</taxon>
        <taxon>Euteleostomi</taxon>
        <taxon>Mammalia</taxon>
        <taxon>Eutheria</taxon>
        <taxon>Euarchontoglires</taxon>
        <taxon>Glires</taxon>
        <taxon>Rodentia</taxon>
        <taxon>Myomorpha</taxon>
        <taxon>Muroidea</taxon>
        <taxon>Muridae</taxon>
        <taxon>Murinae</taxon>
        <taxon>Mus</taxon>
        <taxon>Mus</taxon>
    </lineage>
</organism>
<dbReference type="EC" id="2.7.11.25"/>
<dbReference type="EMBL" id="U43187">
    <property type="protein sequence ID" value="AAB03535.1"/>
    <property type="molecule type" value="mRNA"/>
</dbReference>
<dbReference type="EMBL" id="BC023781">
    <property type="protein sequence ID" value="AAH23781.1"/>
    <property type="molecule type" value="mRNA"/>
</dbReference>
<dbReference type="CCDS" id="CCDS25548.1"/>
<dbReference type="RefSeq" id="NP_036077.1">
    <property type="nucleotide sequence ID" value="NM_011947.4"/>
</dbReference>
<dbReference type="BMRB" id="Q61084"/>
<dbReference type="SMR" id="Q61084"/>
<dbReference type="BioGRID" id="204959">
    <property type="interactions" value="4"/>
</dbReference>
<dbReference type="CORUM" id="Q61084"/>
<dbReference type="FunCoup" id="Q61084">
    <property type="interactions" value="1753"/>
</dbReference>
<dbReference type="IntAct" id="Q61084">
    <property type="interactions" value="3"/>
</dbReference>
<dbReference type="MINT" id="Q61084"/>
<dbReference type="STRING" id="10090.ENSMUSP00000002044"/>
<dbReference type="iPTMnet" id="Q61084"/>
<dbReference type="PhosphoSitePlus" id="Q61084"/>
<dbReference type="jPOST" id="Q61084"/>
<dbReference type="PaxDb" id="10090-ENSMUSP00000002044"/>
<dbReference type="ProteomicsDB" id="292067"/>
<dbReference type="Pumba" id="Q61084"/>
<dbReference type="Antibodypedia" id="31306">
    <property type="antibodies" value="244 antibodies from 39 providers"/>
</dbReference>
<dbReference type="DNASU" id="26406"/>
<dbReference type="Ensembl" id="ENSMUST00000002044.10">
    <property type="protein sequence ID" value="ENSMUSP00000002044.10"/>
    <property type="gene ID" value="ENSMUSG00000020700.12"/>
</dbReference>
<dbReference type="GeneID" id="26406"/>
<dbReference type="KEGG" id="mmu:26406"/>
<dbReference type="UCSC" id="uc007lyc.1">
    <property type="organism name" value="mouse"/>
</dbReference>
<dbReference type="AGR" id="MGI:1346874"/>
<dbReference type="CTD" id="4215"/>
<dbReference type="MGI" id="MGI:1346874">
    <property type="gene designation" value="Map3k3"/>
</dbReference>
<dbReference type="VEuPathDB" id="HostDB:ENSMUSG00000020700"/>
<dbReference type="eggNOG" id="KOG0198">
    <property type="taxonomic scope" value="Eukaryota"/>
</dbReference>
<dbReference type="GeneTree" id="ENSGT00940000158767"/>
<dbReference type="HOGENOM" id="CLU_029447_0_0_1"/>
<dbReference type="InParanoid" id="Q61084"/>
<dbReference type="OMA" id="SQDRNHQ"/>
<dbReference type="OrthoDB" id="8693905at2759"/>
<dbReference type="PhylomeDB" id="Q61084"/>
<dbReference type="TreeFam" id="TF105113"/>
<dbReference type="BRENDA" id="2.7.12.2">
    <property type="organism ID" value="3474"/>
</dbReference>
<dbReference type="Reactome" id="R-MMU-9020702">
    <property type="pathway name" value="Interleukin-1 signaling"/>
</dbReference>
<dbReference type="BioGRID-ORCS" id="26406">
    <property type="hits" value="3 hits in 80 CRISPR screens"/>
</dbReference>
<dbReference type="ChiTaRS" id="Map3k3">
    <property type="organism name" value="mouse"/>
</dbReference>
<dbReference type="PRO" id="PR:Q61084"/>
<dbReference type="Proteomes" id="UP000000589">
    <property type="component" value="Chromosome 11"/>
</dbReference>
<dbReference type="RNAct" id="Q61084">
    <property type="molecule type" value="protein"/>
</dbReference>
<dbReference type="Bgee" id="ENSMUSG00000020700">
    <property type="expression patterns" value="Expressed in granulocyte and 263 other cell types or tissues"/>
</dbReference>
<dbReference type="GO" id="GO:0005524">
    <property type="term" value="F:ATP binding"/>
    <property type="evidence" value="ECO:0007669"/>
    <property type="project" value="UniProtKB-KW"/>
</dbReference>
<dbReference type="GO" id="GO:0004709">
    <property type="term" value="F:MAP kinase kinase kinase activity"/>
    <property type="evidence" value="ECO:0007669"/>
    <property type="project" value="UniProtKB-EC"/>
</dbReference>
<dbReference type="GO" id="GO:0046872">
    <property type="term" value="F:metal ion binding"/>
    <property type="evidence" value="ECO:0007669"/>
    <property type="project" value="UniProtKB-KW"/>
</dbReference>
<dbReference type="GO" id="GO:0004672">
    <property type="term" value="F:protein kinase activity"/>
    <property type="evidence" value="ECO:0000250"/>
    <property type="project" value="UniProtKB"/>
</dbReference>
<dbReference type="GO" id="GO:0106310">
    <property type="term" value="F:protein serine kinase activity"/>
    <property type="evidence" value="ECO:0007669"/>
    <property type="project" value="RHEA"/>
</dbReference>
<dbReference type="GO" id="GO:0001568">
    <property type="term" value="P:blood vessel development"/>
    <property type="evidence" value="ECO:0000315"/>
    <property type="project" value="MGI"/>
</dbReference>
<dbReference type="GO" id="GO:0035556">
    <property type="term" value="P:intracellular signal transduction"/>
    <property type="evidence" value="ECO:0000266"/>
    <property type="project" value="MGI"/>
</dbReference>
<dbReference type="GO" id="GO:0043123">
    <property type="term" value="P:positive regulation of canonical NF-kappaB signal transduction"/>
    <property type="evidence" value="ECO:0007669"/>
    <property type="project" value="Ensembl"/>
</dbReference>
<dbReference type="GO" id="GO:1900745">
    <property type="term" value="P:positive regulation of p38MAPK cascade"/>
    <property type="evidence" value="ECO:0000314"/>
    <property type="project" value="MGI"/>
</dbReference>
<dbReference type="CDD" id="cd06405">
    <property type="entry name" value="PB1_Mekk2_3"/>
    <property type="match status" value="1"/>
</dbReference>
<dbReference type="CDD" id="cd06625">
    <property type="entry name" value="STKc_MEKK3_like"/>
    <property type="match status" value="1"/>
</dbReference>
<dbReference type="FunFam" id="1.10.510.10:FF:000071">
    <property type="entry name" value="Mitogen-activated protein kinase kinase kinase 3 isoform 2"/>
    <property type="match status" value="1"/>
</dbReference>
<dbReference type="FunFam" id="3.10.20.90:FF:000026">
    <property type="entry name" value="Mitogen-activated protein kinase kinase kinase 3 isoform 2"/>
    <property type="match status" value="1"/>
</dbReference>
<dbReference type="Gene3D" id="3.10.20.90">
    <property type="entry name" value="Phosphatidylinositol 3-kinase Catalytic Subunit, Chain A, domain 1"/>
    <property type="match status" value="1"/>
</dbReference>
<dbReference type="Gene3D" id="1.10.510.10">
    <property type="entry name" value="Transferase(Phosphotransferase) domain 1"/>
    <property type="match status" value="1"/>
</dbReference>
<dbReference type="InterPro" id="IPR011009">
    <property type="entry name" value="Kinase-like_dom_sf"/>
</dbReference>
<dbReference type="InterPro" id="IPR053793">
    <property type="entry name" value="PB1-like"/>
</dbReference>
<dbReference type="InterPro" id="IPR000270">
    <property type="entry name" value="PB1_dom"/>
</dbReference>
<dbReference type="InterPro" id="IPR034879">
    <property type="entry name" value="PB1_MEKK2/3"/>
</dbReference>
<dbReference type="InterPro" id="IPR000719">
    <property type="entry name" value="Prot_kinase_dom"/>
</dbReference>
<dbReference type="PANTHER" id="PTHR11584:SF392">
    <property type="entry name" value="MITOGEN-ACTIVATED PROTEIN KINASE KINASE KINASE 3"/>
    <property type="match status" value="1"/>
</dbReference>
<dbReference type="PANTHER" id="PTHR11584">
    <property type="entry name" value="SERINE/THREONINE PROTEIN KINASE"/>
    <property type="match status" value="1"/>
</dbReference>
<dbReference type="Pfam" id="PF00564">
    <property type="entry name" value="PB1"/>
    <property type="match status" value="1"/>
</dbReference>
<dbReference type="Pfam" id="PF00069">
    <property type="entry name" value="Pkinase"/>
    <property type="match status" value="1"/>
</dbReference>
<dbReference type="SMART" id="SM00666">
    <property type="entry name" value="PB1"/>
    <property type="match status" value="1"/>
</dbReference>
<dbReference type="SMART" id="SM00220">
    <property type="entry name" value="S_TKc"/>
    <property type="match status" value="1"/>
</dbReference>
<dbReference type="SUPFAM" id="SSF54277">
    <property type="entry name" value="CAD &amp; PB1 domains"/>
    <property type="match status" value="1"/>
</dbReference>
<dbReference type="SUPFAM" id="SSF56112">
    <property type="entry name" value="Protein kinase-like (PK-like)"/>
    <property type="match status" value="1"/>
</dbReference>
<dbReference type="PROSITE" id="PS51745">
    <property type="entry name" value="PB1"/>
    <property type="match status" value="1"/>
</dbReference>
<dbReference type="PROSITE" id="PS50011">
    <property type="entry name" value="PROTEIN_KINASE_DOM"/>
    <property type="match status" value="1"/>
</dbReference>
<accession>Q61084</accession>
<feature type="chain" id="PRO_0000086246" description="Mitogen-activated protein kinase kinase kinase 3">
    <location>
        <begin position="1"/>
        <end position="626"/>
    </location>
</feature>
<feature type="domain" description="PB1" evidence="4">
    <location>
        <begin position="44"/>
        <end position="123"/>
    </location>
</feature>
<feature type="domain" description="Protein kinase" evidence="3">
    <location>
        <begin position="362"/>
        <end position="622"/>
    </location>
</feature>
<feature type="region of interest" description="Disordered" evidence="5">
    <location>
        <begin position="125"/>
        <end position="184"/>
    </location>
</feature>
<feature type="region of interest" description="Disordered" evidence="5">
    <location>
        <begin position="218"/>
        <end position="273"/>
    </location>
</feature>
<feature type="compositionally biased region" description="Polar residues" evidence="5">
    <location>
        <begin position="128"/>
        <end position="137"/>
    </location>
</feature>
<feature type="compositionally biased region" description="Polar residues" evidence="5">
    <location>
        <begin position="144"/>
        <end position="155"/>
    </location>
</feature>
<feature type="compositionally biased region" description="Polar residues" evidence="5">
    <location>
        <begin position="165"/>
        <end position="174"/>
    </location>
</feature>
<feature type="compositionally biased region" description="Polar residues" evidence="5">
    <location>
        <begin position="219"/>
        <end position="247"/>
    </location>
</feature>
<feature type="compositionally biased region" description="Basic and acidic residues" evidence="5">
    <location>
        <begin position="250"/>
        <end position="270"/>
    </location>
</feature>
<feature type="active site" description="Proton acceptor" evidence="3">
    <location>
        <position position="489"/>
    </location>
</feature>
<feature type="binding site" evidence="3">
    <location>
        <begin position="368"/>
        <end position="376"/>
    </location>
    <ligand>
        <name>ATP</name>
        <dbReference type="ChEBI" id="CHEBI:30616"/>
    </ligand>
</feature>
<feature type="binding site" evidence="3">
    <location>
        <position position="391"/>
    </location>
    <ligand>
        <name>ATP</name>
        <dbReference type="ChEBI" id="CHEBI:30616"/>
    </ligand>
</feature>
<feature type="modified residue" description="Phosphoserine" evidence="11">
    <location>
        <position position="147"/>
    </location>
</feature>
<feature type="modified residue" description="Phosphoserine" evidence="11">
    <location>
        <position position="166"/>
    </location>
</feature>
<feature type="modified residue" description="Phosphoserine" evidence="2">
    <location>
        <position position="250"/>
    </location>
</feature>
<feature type="modified residue" description="Phosphoserine" evidence="2">
    <location>
        <position position="312"/>
    </location>
</feature>
<feature type="modified residue" description="Phosphoserine; by SGK1" evidence="10 11">
    <location>
        <position position="337"/>
    </location>
</feature>
<feature type="modified residue" description="Phosphoserine" evidence="10 11">
    <location>
        <position position="340"/>
    </location>
</feature>
<evidence type="ECO:0000250" key="1"/>
<evidence type="ECO:0000250" key="2">
    <source>
        <dbReference type="UniProtKB" id="Q99759"/>
    </source>
</evidence>
<evidence type="ECO:0000255" key="3">
    <source>
        <dbReference type="PROSITE-ProRule" id="PRU00159"/>
    </source>
</evidence>
<evidence type="ECO:0000255" key="4">
    <source>
        <dbReference type="PROSITE-ProRule" id="PRU01081"/>
    </source>
</evidence>
<evidence type="ECO:0000256" key="5">
    <source>
        <dbReference type="SAM" id="MobiDB-lite"/>
    </source>
</evidence>
<evidence type="ECO:0000269" key="6">
    <source>
    </source>
</evidence>
<evidence type="ECO:0000269" key="7">
    <source>
    </source>
</evidence>
<evidence type="ECO:0000269" key="8">
    <source>
    </source>
</evidence>
<evidence type="ECO:0000305" key="9"/>
<evidence type="ECO:0007744" key="10">
    <source>
    </source>
</evidence>
<evidence type="ECO:0007744" key="11">
    <source>
    </source>
</evidence>
<protein>
    <recommendedName>
        <fullName>Mitogen-activated protein kinase kinase kinase 3</fullName>
        <ecNumber>2.7.11.25</ecNumber>
    </recommendedName>
    <alternativeName>
        <fullName>MAPK/ERK kinase kinase 3</fullName>
        <shortName>MEK kinase 3</shortName>
        <shortName>MEKK 3</shortName>
    </alternativeName>
</protein>
<name>M3K3_MOUSE</name>
<reference key="1">
    <citation type="journal article" date="1996" name="J. Biol. Chem.">
        <title>Molecular cloning of mitogen-activated protein/ERK kinase kinases (MEKK) 2 and 3. Regulation of sequential phosphorylation pathways involving mitogen-activated protein kinase and c-Jun kinase.</title>
        <authorList>
            <person name="Blank J.L."/>
            <person name="Gerwins P."/>
            <person name="Elliott E.M."/>
            <person name="Sather S."/>
            <person name="Johnson G.L."/>
        </authorList>
    </citation>
    <scope>NUCLEOTIDE SEQUENCE [MRNA]</scope>
    <scope>FUNCTION</scope>
    <source>
        <tissue>Brain</tissue>
    </source>
</reference>
<reference key="2">
    <citation type="journal article" date="2004" name="Genome Res.">
        <title>The status, quality, and expansion of the NIH full-length cDNA project: the Mammalian Gene Collection (MGC).</title>
        <authorList>
            <consortium name="The MGC Project Team"/>
        </authorList>
    </citation>
    <scope>NUCLEOTIDE SEQUENCE [LARGE SCALE MRNA]</scope>
    <source>
        <strain>FVB/N</strain>
        <tissue>Mammary gland</tissue>
    </source>
</reference>
<reference key="3">
    <citation type="journal article" date="2002" name="Proc. Natl. Acad. Sci. U.S.A.">
        <title>JLP: a scaffolding protein that tethers JNK/p38MAPK signaling modules and transcription factors.</title>
        <authorList>
            <person name="Lee C.M."/>
            <person name="Onesime D."/>
            <person name="Reddy C.D."/>
            <person name="Dhanasekaran N."/>
            <person name="Reddy E.P."/>
        </authorList>
    </citation>
    <scope>INTERACTION WITH SPAG9</scope>
</reference>
<reference key="4">
    <citation type="journal article" date="2003" name="Nat. Cell Biol.">
        <title>Rac-MEKK3-MKK3 scaffolding for p38 MAPK activation during hyperosmotic shock.</title>
        <authorList>
            <person name="Uhlik M.T."/>
            <person name="Abell A.N."/>
            <person name="Johnson N.L."/>
            <person name="Sun W."/>
            <person name="Cuevas B.D."/>
            <person name="Lobel-Rice K.E."/>
            <person name="Horne E.A."/>
            <person name="Dell'Acqua M.L."/>
            <person name="Johnson G.L."/>
        </authorList>
    </citation>
    <scope>INTERACTION WITH MAP2K3; RAC1 AND CCM2</scope>
</reference>
<reference key="5">
    <citation type="journal article" date="2007" name="Proc. Natl. Acad. Sci. U.S.A.">
        <title>Large-scale phosphorylation analysis of mouse liver.</title>
        <authorList>
            <person name="Villen J."/>
            <person name="Beausoleil S.A."/>
            <person name="Gerber S.A."/>
            <person name="Gygi S.P."/>
        </authorList>
    </citation>
    <scope>PHOSPHORYLATION [LARGE SCALE ANALYSIS] AT SER-337 AND SER-340</scope>
    <scope>IDENTIFICATION BY MASS SPECTROMETRY [LARGE SCALE ANALYSIS]</scope>
    <source>
        <tissue>Liver</tissue>
    </source>
</reference>
<reference key="6">
    <citation type="journal article" date="2010" name="Cell">
        <title>A tissue-specific atlas of mouse protein phosphorylation and expression.</title>
        <authorList>
            <person name="Huttlin E.L."/>
            <person name="Jedrychowski M.P."/>
            <person name="Elias J.E."/>
            <person name="Goswami T."/>
            <person name="Rad R."/>
            <person name="Beausoleil S.A."/>
            <person name="Villen J."/>
            <person name="Haas W."/>
            <person name="Sowa M.E."/>
            <person name="Gygi S.P."/>
        </authorList>
    </citation>
    <scope>PHOSPHORYLATION [LARGE SCALE ANALYSIS] AT SER-147; SER-166; SER-337 AND SER-340</scope>
    <scope>IDENTIFICATION BY MASS SPECTROMETRY [LARGE SCALE ANALYSIS]</scope>
    <source>
        <tissue>Brown adipose tissue</tissue>
        <tissue>Heart</tissue>
        <tissue>Kidney</tissue>
        <tissue>Liver</tissue>
        <tissue>Lung</tissue>
        <tissue>Pancreas</tissue>
        <tissue>Spleen</tissue>
        <tissue>Testis</tissue>
    </source>
</reference>
<comment type="function">
    <text evidence="8">Component of a protein kinase signal transduction cascade. Mediates activation of the NF-kappa-B, AP1 and DDIT3 transcriptional regulators.</text>
</comment>
<comment type="catalytic activity">
    <reaction>
        <text>L-seryl-[protein] + ATP = O-phospho-L-seryl-[protein] + ADP + H(+)</text>
        <dbReference type="Rhea" id="RHEA:17989"/>
        <dbReference type="Rhea" id="RHEA-COMP:9863"/>
        <dbReference type="Rhea" id="RHEA-COMP:11604"/>
        <dbReference type="ChEBI" id="CHEBI:15378"/>
        <dbReference type="ChEBI" id="CHEBI:29999"/>
        <dbReference type="ChEBI" id="CHEBI:30616"/>
        <dbReference type="ChEBI" id="CHEBI:83421"/>
        <dbReference type="ChEBI" id="CHEBI:456216"/>
        <dbReference type="EC" id="2.7.11.25"/>
    </reaction>
</comment>
<comment type="catalytic activity">
    <reaction>
        <text>L-threonyl-[protein] + ATP = O-phospho-L-threonyl-[protein] + ADP + H(+)</text>
        <dbReference type="Rhea" id="RHEA:46608"/>
        <dbReference type="Rhea" id="RHEA-COMP:11060"/>
        <dbReference type="Rhea" id="RHEA-COMP:11605"/>
        <dbReference type="ChEBI" id="CHEBI:15378"/>
        <dbReference type="ChEBI" id="CHEBI:30013"/>
        <dbReference type="ChEBI" id="CHEBI:30616"/>
        <dbReference type="ChEBI" id="CHEBI:61977"/>
        <dbReference type="ChEBI" id="CHEBI:456216"/>
        <dbReference type="EC" id="2.7.11.25"/>
    </reaction>
</comment>
<comment type="cofactor">
    <cofactor>
        <name>Mg(2+)</name>
        <dbReference type="ChEBI" id="CHEBI:18420"/>
    </cofactor>
</comment>
<comment type="activity regulation">
    <text evidence="1">Activated by phosphorylation on Thr-530.</text>
</comment>
<comment type="subunit">
    <text evidence="6 7">Binds both upstream activators and downstream substrates in multimolecular complexes. Part of a complex with MAP2K3, RAC1 and CCM2. Interacts with MAP2K5 and SPAG9.</text>
</comment>
<comment type="interaction">
    <interactant intactId="EBI-446250">
        <id>Q61084</id>
    </interactant>
    <interactant intactId="EBI-446144">
        <id>Q9WVS7</id>
        <label>Map2k5</label>
    </interactant>
    <organismsDiffer>false</organismsDiffer>
    <experiments>15</experiments>
</comment>
<comment type="interaction">
    <interactant intactId="EBI-446250">
        <id>Q61084</id>
    </interactant>
    <interactant intactId="EBI-448028">
        <id>P70196</id>
        <label>Traf6</label>
    </interactant>
    <organismsDiffer>false</organismsDiffer>
    <experiments>5</experiments>
</comment>
<comment type="PTM">
    <text evidence="1">Phosphorylation at Ser-166 and Ser-337 by SGK1 inhibits its activity.</text>
</comment>
<comment type="similarity">
    <text evidence="9">Belongs to the protein kinase superfamily. STE Ser/Thr protein kinase family. MAP kinase kinase kinase subfamily.</text>
</comment>
<gene>
    <name type="primary">Map3k3</name>
    <name type="synonym">Mekk3</name>
</gene>
<sequence>MDEQEALDSIMKDLVALQMSRRTRLSGYETMKNKDTGHPNRQSDVRIKFEHNGERRIIAFSRPVRYEDVEHKVTTVFGQPLDLHYMNNELSILLKNQDDLDKAIDILDRSSSMKSLRILLLSQDRNHTSSSPHSGVSRQVRIKPSQSAGDINTIYQAPEPRSRHLSVSSQNPGRSSPPPGYVPERQQHIARQGSYTSINSEGEFIPETSEQCMLDPLSSAENSLSGSCQSLDRSADSPSFRKSQMSRARSFPDNRKECSDRETQLYDKGVKGGTYPRRYHVSVHHKDYNDGRRTFPRIRRHQGNLFTLVPSSRSLSTNGENMGVAVQYLDPRGRLRSADSENALTVQERNVPTKSPSAPINWRRGKLLGQGAFGRVYLCYDVDTGRELASKQVQFDPDSPETSKEVSALECEIQLLKNLQHERIVQYYGCLRDRAEKILTIFMEYMPGGSVKDQLKAYGALTESVTRKYTRQILEGMSYLHSNMIVHRDIKGANILRDSAGNVKLGDFGASKRLQTICMSGTGIRSVTGTPYWMSPEVISGEGYGRKADVWSLGCTVVEMLTEKPPWAEYEAMAAIFKIATQPTNPQLPSHISEHGRDFLRRIFVEARQRPSAEELLTHHFAQLVY</sequence>
<keyword id="KW-0067">ATP-binding</keyword>
<keyword id="KW-0418">Kinase</keyword>
<keyword id="KW-0460">Magnesium</keyword>
<keyword id="KW-0479">Metal-binding</keyword>
<keyword id="KW-0547">Nucleotide-binding</keyword>
<keyword id="KW-0597">Phosphoprotein</keyword>
<keyword id="KW-1185">Reference proteome</keyword>
<keyword id="KW-0723">Serine/threonine-protein kinase</keyword>
<keyword id="KW-0808">Transferase</keyword>
<proteinExistence type="evidence at protein level"/>